<sequence>MILSIESSCDDSSIAITRIKDYKLLFHKKISQELAHSEYGGVVPELASRLHAEALPKILEEAKEFLPQIKAIAVTNEPGLSVTLLEGIMMAKALHLALNVPLIGVNHLIGHVYSLFIEKEAVLPKMVLLVSGGHTMILDVKGYKDIKVLATTLDDSFGESFDKVAKMMGLGYPGGPVIEKLAQKGDANRFDFPIPLKNAKELAFSYSGLKNAVRLALSEMENLSEQDMADIAASFQKAAIAHLLQKTKKACEIYKPSDFAIVGGASANMALRKAFEQECAKRAIPIAFAKLEYCSDNAAMIGRAAVEAFLMNDFTDMDALVAIPRSCFV</sequence>
<accession>A6Q5L0</accession>
<proteinExistence type="inferred from homology"/>
<dbReference type="EC" id="2.3.1.234" evidence="1"/>
<dbReference type="EMBL" id="AP009178">
    <property type="protein sequence ID" value="BAF70769.1"/>
    <property type="molecule type" value="Genomic_DNA"/>
</dbReference>
<dbReference type="RefSeq" id="WP_012083032.1">
    <property type="nucleotide sequence ID" value="NC_009662.1"/>
</dbReference>
<dbReference type="SMR" id="A6Q5L0"/>
<dbReference type="FunCoup" id="A6Q5L0">
    <property type="interactions" value="448"/>
</dbReference>
<dbReference type="STRING" id="387092.NIS_1663"/>
<dbReference type="KEGG" id="nis:NIS_1663"/>
<dbReference type="eggNOG" id="COG0533">
    <property type="taxonomic scope" value="Bacteria"/>
</dbReference>
<dbReference type="HOGENOM" id="CLU_023208_0_3_7"/>
<dbReference type="InParanoid" id="A6Q5L0"/>
<dbReference type="OrthoDB" id="9806197at2"/>
<dbReference type="Proteomes" id="UP000001118">
    <property type="component" value="Chromosome"/>
</dbReference>
<dbReference type="GO" id="GO:0005737">
    <property type="term" value="C:cytoplasm"/>
    <property type="evidence" value="ECO:0007669"/>
    <property type="project" value="UniProtKB-SubCell"/>
</dbReference>
<dbReference type="GO" id="GO:0005506">
    <property type="term" value="F:iron ion binding"/>
    <property type="evidence" value="ECO:0007669"/>
    <property type="project" value="UniProtKB-UniRule"/>
</dbReference>
<dbReference type="GO" id="GO:0061711">
    <property type="term" value="F:N(6)-L-threonylcarbamoyladenine synthase activity"/>
    <property type="evidence" value="ECO:0007669"/>
    <property type="project" value="UniProtKB-EC"/>
</dbReference>
<dbReference type="GO" id="GO:0002949">
    <property type="term" value="P:tRNA threonylcarbamoyladenosine modification"/>
    <property type="evidence" value="ECO:0007669"/>
    <property type="project" value="UniProtKB-UniRule"/>
</dbReference>
<dbReference type="Gene3D" id="3.30.420.40">
    <property type="match status" value="2"/>
</dbReference>
<dbReference type="HAMAP" id="MF_01445">
    <property type="entry name" value="TsaD"/>
    <property type="match status" value="1"/>
</dbReference>
<dbReference type="InterPro" id="IPR043129">
    <property type="entry name" value="ATPase_NBD"/>
</dbReference>
<dbReference type="InterPro" id="IPR000905">
    <property type="entry name" value="Gcp-like_dom"/>
</dbReference>
<dbReference type="InterPro" id="IPR017861">
    <property type="entry name" value="KAE1/TsaD"/>
</dbReference>
<dbReference type="InterPro" id="IPR017860">
    <property type="entry name" value="Peptidase_M22_CS"/>
</dbReference>
<dbReference type="InterPro" id="IPR022450">
    <property type="entry name" value="TsaD"/>
</dbReference>
<dbReference type="NCBIfam" id="TIGR00329">
    <property type="entry name" value="gcp_kae1"/>
    <property type="match status" value="1"/>
</dbReference>
<dbReference type="NCBIfam" id="TIGR03723">
    <property type="entry name" value="T6A_TsaD_YgjD"/>
    <property type="match status" value="1"/>
</dbReference>
<dbReference type="PANTHER" id="PTHR11735">
    <property type="entry name" value="TRNA N6-ADENOSINE THREONYLCARBAMOYLTRANSFERASE"/>
    <property type="match status" value="1"/>
</dbReference>
<dbReference type="PANTHER" id="PTHR11735:SF6">
    <property type="entry name" value="TRNA N6-ADENOSINE THREONYLCARBAMOYLTRANSFERASE, MITOCHONDRIAL"/>
    <property type="match status" value="1"/>
</dbReference>
<dbReference type="Pfam" id="PF00814">
    <property type="entry name" value="TsaD"/>
    <property type="match status" value="1"/>
</dbReference>
<dbReference type="PRINTS" id="PR00789">
    <property type="entry name" value="OSIALOPTASE"/>
</dbReference>
<dbReference type="SUPFAM" id="SSF53067">
    <property type="entry name" value="Actin-like ATPase domain"/>
    <property type="match status" value="2"/>
</dbReference>
<dbReference type="PROSITE" id="PS01016">
    <property type="entry name" value="GLYCOPROTEASE"/>
    <property type="match status" value="1"/>
</dbReference>
<protein>
    <recommendedName>
        <fullName evidence="1">tRNA N6-adenosine threonylcarbamoyltransferase</fullName>
        <ecNumber evidence="1">2.3.1.234</ecNumber>
    </recommendedName>
    <alternativeName>
        <fullName evidence="1">N6-L-threonylcarbamoyladenine synthase</fullName>
        <shortName evidence="1">t(6)A synthase</shortName>
    </alternativeName>
    <alternativeName>
        <fullName evidence="1">t(6)A37 threonylcarbamoyladenosine biosynthesis protein TsaD</fullName>
    </alternativeName>
    <alternativeName>
        <fullName evidence="1">tRNA threonylcarbamoyladenosine biosynthesis protein TsaD</fullName>
    </alternativeName>
</protein>
<name>TSAD_NITSB</name>
<reference key="1">
    <citation type="journal article" date="2007" name="Proc. Natl. Acad. Sci. U.S.A.">
        <title>Deep-sea vent epsilon-proteobacterial genomes provide insights into emergence of pathogens.</title>
        <authorList>
            <person name="Nakagawa S."/>
            <person name="Takaki Y."/>
            <person name="Shimamura S."/>
            <person name="Reysenbach A.-L."/>
            <person name="Takai K."/>
            <person name="Horikoshi K."/>
        </authorList>
    </citation>
    <scope>NUCLEOTIDE SEQUENCE [LARGE SCALE GENOMIC DNA]</scope>
    <source>
        <strain>SB155-2</strain>
    </source>
</reference>
<organism>
    <name type="scientific">Nitratiruptor sp. (strain SB155-2)</name>
    <dbReference type="NCBI Taxonomy" id="387092"/>
    <lineage>
        <taxon>Bacteria</taxon>
        <taxon>Pseudomonadati</taxon>
        <taxon>Campylobacterota</taxon>
        <taxon>Epsilonproteobacteria</taxon>
        <taxon>Nautiliales</taxon>
        <taxon>Nitratiruptoraceae</taxon>
        <taxon>Nitratiruptor</taxon>
    </lineage>
</organism>
<feature type="chain" id="PRO_1000024438" description="tRNA N6-adenosine threonylcarbamoyltransferase">
    <location>
        <begin position="1"/>
        <end position="329"/>
    </location>
</feature>
<feature type="binding site" evidence="1">
    <location>
        <position position="107"/>
    </location>
    <ligand>
        <name>Fe cation</name>
        <dbReference type="ChEBI" id="CHEBI:24875"/>
    </ligand>
</feature>
<feature type="binding site" evidence="1">
    <location>
        <position position="111"/>
    </location>
    <ligand>
        <name>Fe cation</name>
        <dbReference type="ChEBI" id="CHEBI:24875"/>
    </ligand>
</feature>
<feature type="binding site" evidence="1">
    <location>
        <begin position="129"/>
        <end position="133"/>
    </location>
    <ligand>
        <name>substrate</name>
    </ligand>
</feature>
<feature type="binding site" evidence="1">
    <location>
        <position position="162"/>
    </location>
    <ligand>
        <name>substrate</name>
    </ligand>
</feature>
<feature type="binding site" evidence="1">
    <location>
        <position position="175"/>
    </location>
    <ligand>
        <name>substrate</name>
    </ligand>
</feature>
<feature type="binding site" evidence="1">
    <location>
        <position position="268"/>
    </location>
    <ligand>
        <name>substrate</name>
    </ligand>
</feature>
<feature type="binding site" evidence="1">
    <location>
        <position position="296"/>
    </location>
    <ligand>
        <name>Fe cation</name>
        <dbReference type="ChEBI" id="CHEBI:24875"/>
    </ligand>
</feature>
<keyword id="KW-0012">Acyltransferase</keyword>
<keyword id="KW-0963">Cytoplasm</keyword>
<keyword id="KW-0408">Iron</keyword>
<keyword id="KW-0479">Metal-binding</keyword>
<keyword id="KW-1185">Reference proteome</keyword>
<keyword id="KW-0808">Transferase</keyword>
<keyword id="KW-0819">tRNA processing</keyword>
<comment type="function">
    <text evidence="1">Required for the formation of a threonylcarbamoyl group on adenosine at position 37 (t(6)A37) in tRNAs that read codons beginning with adenine. Is involved in the transfer of the threonylcarbamoyl moiety of threonylcarbamoyl-AMP (TC-AMP) to the N6 group of A37, together with TsaE and TsaB. TsaD likely plays a direct catalytic role in this reaction.</text>
</comment>
<comment type="catalytic activity">
    <reaction evidence="1">
        <text>L-threonylcarbamoyladenylate + adenosine(37) in tRNA = N(6)-L-threonylcarbamoyladenosine(37) in tRNA + AMP + H(+)</text>
        <dbReference type="Rhea" id="RHEA:37059"/>
        <dbReference type="Rhea" id="RHEA-COMP:10162"/>
        <dbReference type="Rhea" id="RHEA-COMP:10163"/>
        <dbReference type="ChEBI" id="CHEBI:15378"/>
        <dbReference type="ChEBI" id="CHEBI:73682"/>
        <dbReference type="ChEBI" id="CHEBI:74411"/>
        <dbReference type="ChEBI" id="CHEBI:74418"/>
        <dbReference type="ChEBI" id="CHEBI:456215"/>
        <dbReference type="EC" id="2.3.1.234"/>
    </reaction>
</comment>
<comment type="cofactor">
    <cofactor evidence="1">
        <name>Fe(2+)</name>
        <dbReference type="ChEBI" id="CHEBI:29033"/>
    </cofactor>
    <text evidence="1">Binds 1 Fe(2+) ion per subunit.</text>
</comment>
<comment type="subcellular location">
    <subcellularLocation>
        <location evidence="1">Cytoplasm</location>
    </subcellularLocation>
</comment>
<comment type="similarity">
    <text evidence="1">Belongs to the KAE1 / TsaD family.</text>
</comment>
<evidence type="ECO:0000255" key="1">
    <source>
        <dbReference type="HAMAP-Rule" id="MF_01445"/>
    </source>
</evidence>
<gene>
    <name evidence="1" type="primary">tsaD</name>
    <name type="synonym">gcp</name>
    <name type="ordered locus">NIS_1663</name>
</gene>